<keyword id="KW-0002">3D-structure</keyword>
<keyword id="KW-0963">Cytoplasm</keyword>
<keyword id="KW-0489">Methyltransferase</keyword>
<keyword id="KW-1185">Reference proteome</keyword>
<keyword id="KW-0698">rRNA processing</keyword>
<keyword id="KW-0949">S-adenosyl-L-methionine</keyword>
<keyword id="KW-0808">Transferase</keyword>
<evidence type="ECO:0000255" key="1">
    <source>
        <dbReference type="HAMAP-Rule" id="MF_00658"/>
    </source>
</evidence>
<evidence type="ECO:0007829" key="2">
    <source>
        <dbReference type="PDB" id="1O6D"/>
    </source>
</evidence>
<gene>
    <name evidence="1" type="primary">rlmH</name>
    <name type="ordered locus">TM_0844</name>
</gene>
<name>RLMH_THEMA</name>
<comment type="function">
    <text evidence="1">Specifically methylates the pseudouridine at position 1915 (m3Psi1915) in 23S rRNA.</text>
</comment>
<comment type="catalytic activity">
    <reaction evidence="1">
        <text>pseudouridine(1915) in 23S rRNA + S-adenosyl-L-methionine = N(3)-methylpseudouridine(1915) in 23S rRNA + S-adenosyl-L-homocysteine + H(+)</text>
        <dbReference type="Rhea" id="RHEA:42752"/>
        <dbReference type="Rhea" id="RHEA-COMP:10221"/>
        <dbReference type="Rhea" id="RHEA-COMP:10222"/>
        <dbReference type="ChEBI" id="CHEBI:15378"/>
        <dbReference type="ChEBI" id="CHEBI:57856"/>
        <dbReference type="ChEBI" id="CHEBI:59789"/>
        <dbReference type="ChEBI" id="CHEBI:65314"/>
        <dbReference type="ChEBI" id="CHEBI:74486"/>
        <dbReference type="EC" id="2.1.1.177"/>
    </reaction>
</comment>
<comment type="subunit">
    <text evidence="1">Homodimer.</text>
</comment>
<comment type="subcellular location">
    <subcellularLocation>
        <location evidence="1">Cytoplasm</location>
    </subcellularLocation>
</comment>
<comment type="similarity">
    <text evidence="1">Belongs to the RNA methyltransferase RlmH family.</text>
</comment>
<feature type="chain" id="PRO_0000198200" description="Ribosomal RNA large subunit methyltransferase H">
    <location>
        <begin position="1"/>
        <end position="151"/>
    </location>
</feature>
<feature type="binding site" evidence="1">
    <location>
        <position position="100"/>
    </location>
    <ligand>
        <name>S-adenosyl-L-methionine</name>
        <dbReference type="ChEBI" id="CHEBI:59789"/>
    </ligand>
</feature>
<feature type="binding site" evidence="1">
    <location>
        <begin position="119"/>
        <end position="124"/>
    </location>
    <ligand>
        <name>S-adenosyl-L-methionine</name>
        <dbReference type="ChEBI" id="CHEBI:59789"/>
    </ligand>
</feature>
<feature type="strand" evidence="2">
    <location>
        <begin position="2"/>
        <end position="9"/>
    </location>
</feature>
<feature type="helix" evidence="2">
    <location>
        <begin position="13"/>
        <end position="26"/>
    </location>
</feature>
<feature type="turn" evidence="2">
    <location>
        <begin position="27"/>
        <end position="29"/>
    </location>
</feature>
<feature type="strand" evidence="2">
    <location>
        <begin position="31"/>
        <end position="37"/>
    </location>
</feature>
<feature type="helix" evidence="2">
    <location>
        <begin position="45"/>
        <end position="57"/>
    </location>
</feature>
<feature type="strand" evidence="2">
    <location>
        <begin position="65"/>
        <end position="69"/>
    </location>
</feature>
<feature type="strand" evidence="2">
    <location>
        <begin position="73"/>
        <end position="75"/>
    </location>
</feature>
<feature type="helix" evidence="2">
    <location>
        <begin position="78"/>
        <end position="91"/>
    </location>
</feature>
<feature type="strand" evidence="2">
    <location>
        <begin position="95"/>
        <end position="99"/>
    </location>
</feature>
<feature type="helix" evidence="2">
    <location>
        <begin position="107"/>
        <end position="112"/>
    </location>
</feature>
<feature type="strand" evidence="2">
    <location>
        <begin position="114"/>
        <end position="118"/>
    </location>
</feature>
<feature type="helix" evidence="2">
    <location>
        <begin position="126"/>
        <end position="144"/>
    </location>
</feature>
<reference key="1">
    <citation type="journal article" date="1999" name="Nature">
        <title>Evidence for lateral gene transfer between Archaea and Bacteria from genome sequence of Thermotoga maritima.</title>
        <authorList>
            <person name="Nelson K.E."/>
            <person name="Clayton R.A."/>
            <person name="Gill S.R."/>
            <person name="Gwinn M.L."/>
            <person name="Dodson R.J."/>
            <person name="Haft D.H."/>
            <person name="Hickey E.K."/>
            <person name="Peterson J.D."/>
            <person name="Nelson W.C."/>
            <person name="Ketchum K.A."/>
            <person name="McDonald L.A."/>
            <person name="Utterback T.R."/>
            <person name="Malek J.A."/>
            <person name="Linher K.D."/>
            <person name="Garrett M.M."/>
            <person name="Stewart A.M."/>
            <person name="Cotton M.D."/>
            <person name="Pratt M.S."/>
            <person name="Phillips C.A."/>
            <person name="Richardson D.L."/>
            <person name="Heidelberg J.F."/>
            <person name="Sutton G.G."/>
            <person name="Fleischmann R.D."/>
            <person name="Eisen J.A."/>
            <person name="White O."/>
            <person name="Salzberg S.L."/>
            <person name="Smith H.O."/>
            <person name="Venter J.C."/>
            <person name="Fraser C.M."/>
        </authorList>
    </citation>
    <scope>NUCLEOTIDE SEQUENCE [LARGE SCALE GENOMIC DNA]</scope>
    <source>
        <strain>ATCC 43589 / DSM 3109 / JCM 10099 / NBRC 100826 / MSB8</strain>
    </source>
</reference>
<reference key="2">
    <citation type="journal article" date="2006" name="BMC Bioinformatics">
        <title>PDB-UF: database of predicted enzymatic functions for unannotated protein structures from structural genomics.</title>
        <authorList>
            <person name="von Grotthuss M."/>
            <person name="Plewczynski D."/>
            <person name="Ginalski K."/>
            <person name="Rychlewski L."/>
            <person name="Shakhnovich E.I."/>
        </authorList>
    </citation>
    <scope>X-RAY CRYSTALLOGRAPHY (1.66 ANGSTROMS) OF 2-151</scope>
</reference>
<proteinExistence type="evidence at protein level"/>
<sequence>MRVRIAVIGKLDGFIKEGIKHYEKFLRRFCKPEVLEIKRVHRGSIEEIVRKETEDLTNRILPGSFVMVMDKRGEEVSSEEFADFLKDLEMKGKDITILIGGPYGLNEEIFAKAHRVFSLSKMTFTHGMTVLIVLEQIFRAFKIIHGENYHY</sequence>
<dbReference type="EC" id="2.1.1.177" evidence="1"/>
<dbReference type="EMBL" id="AE000512">
    <property type="protein sequence ID" value="AAD35926.1"/>
    <property type="molecule type" value="Genomic_DNA"/>
</dbReference>
<dbReference type="PIR" id="E72326">
    <property type="entry name" value="E72326"/>
</dbReference>
<dbReference type="RefSeq" id="NP_228653.1">
    <property type="nucleotide sequence ID" value="NC_000853.1"/>
</dbReference>
<dbReference type="RefSeq" id="WP_004080783.1">
    <property type="nucleotide sequence ID" value="NZ_CP011107.1"/>
</dbReference>
<dbReference type="PDB" id="1O6D">
    <property type="method" value="X-ray"/>
    <property type="resolution" value="1.66 A"/>
    <property type="chains" value="A=2-151"/>
</dbReference>
<dbReference type="PDBsum" id="1O6D"/>
<dbReference type="SMR" id="Q9WZU8"/>
<dbReference type="FunCoup" id="Q9WZU8">
    <property type="interactions" value="161"/>
</dbReference>
<dbReference type="STRING" id="243274.TM_0844"/>
<dbReference type="PaxDb" id="243274-THEMA_00420"/>
<dbReference type="EnsemblBacteria" id="AAD35926">
    <property type="protein sequence ID" value="AAD35926"/>
    <property type="gene ID" value="TM_0844"/>
</dbReference>
<dbReference type="KEGG" id="tma:TM0844"/>
<dbReference type="KEGG" id="tmi:THEMA_00420"/>
<dbReference type="KEGG" id="tmm:Tmari_0846"/>
<dbReference type="KEGG" id="tmw:THMA_0865"/>
<dbReference type="eggNOG" id="COG1576">
    <property type="taxonomic scope" value="Bacteria"/>
</dbReference>
<dbReference type="InParanoid" id="Q9WZU8"/>
<dbReference type="OrthoDB" id="9806643at2"/>
<dbReference type="EvolutionaryTrace" id="Q9WZU8"/>
<dbReference type="Proteomes" id="UP000008183">
    <property type="component" value="Chromosome"/>
</dbReference>
<dbReference type="GO" id="GO:0005737">
    <property type="term" value="C:cytoplasm"/>
    <property type="evidence" value="ECO:0007669"/>
    <property type="project" value="UniProtKB-SubCell"/>
</dbReference>
<dbReference type="GO" id="GO:0070038">
    <property type="term" value="F:rRNA (pseudouridine-N3-)-methyltransferase activity"/>
    <property type="evidence" value="ECO:0007669"/>
    <property type="project" value="UniProtKB-UniRule"/>
</dbReference>
<dbReference type="CDD" id="cd18081">
    <property type="entry name" value="RlmH-like"/>
    <property type="match status" value="1"/>
</dbReference>
<dbReference type="Gene3D" id="3.40.1280.10">
    <property type="match status" value="1"/>
</dbReference>
<dbReference type="HAMAP" id="MF_00658">
    <property type="entry name" value="23SrRNA_methyltr_H"/>
    <property type="match status" value="1"/>
</dbReference>
<dbReference type="InterPro" id="IPR029028">
    <property type="entry name" value="Alpha/beta_knot_MTases"/>
</dbReference>
<dbReference type="InterPro" id="IPR003742">
    <property type="entry name" value="RlmH-like"/>
</dbReference>
<dbReference type="InterPro" id="IPR029026">
    <property type="entry name" value="tRNA_m1G_MTases_N"/>
</dbReference>
<dbReference type="PANTHER" id="PTHR33603">
    <property type="entry name" value="METHYLTRANSFERASE"/>
    <property type="match status" value="1"/>
</dbReference>
<dbReference type="PANTHER" id="PTHR33603:SF1">
    <property type="entry name" value="RIBOSOMAL RNA LARGE SUBUNIT METHYLTRANSFERASE H"/>
    <property type="match status" value="1"/>
</dbReference>
<dbReference type="Pfam" id="PF02590">
    <property type="entry name" value="SPOUT_MTase"/>
    <property type="match status" value="1"/>
</dbReference>
<dbReference type="PIRSF" id="PIRSF004505">
    <property type="entry name" value="MT_bac"/>
    <property type="match status" value="1"/>
</dbReference>
<dbReference type="SUPFAM" id="SSF75217">
    <property type="entry name" value="alpha/beta knot"/>
    <property type="match status" value="1"/>
</dbReference>
<protein>
    <recommendedName>
        <fullName evidence="1">Ribosomal RNA large subunit methyltransferase H</fullName>
        <ecNumber evidence="1">2.1.1.177</ecNumber>
    </recommendedName>
    <alternativeName>
        <fullName evidence="1">23S rRNA (pseudouridine1915-N3)-methyltransferase</fullName>
    </alternativeName>
    <alternativeName>
        <fullName evidence="1">23S rRNA m3Psi1915 methyltransferase</fullName>
    </alternativeName>
    <alternativeName>
        <fullName evidence="1">rRNA (pseudouridine-N3-)-methyltransferase RlmH</fullName>
    </alternativeName>
</protein>
<accession>Q9WZU8</accession>
<organism>
    <name type="scientific">Thermotoga maritima (strain ATCC 43589 / DSM 3109 / JCM 10099 / NBRC 100826 / MSB8)</name>
    <dbReference type="NCBI Taxonomy" id="243274"/>
    <lineage>
        <taxon>Bacteria</taxon>
        <taxon>Thermotogati</taxon>
        <taxon>Thermotogota</taxon>
        <taxon>Thermotogae</taxon>
        <taxon>Thermotogales</taxon>
        <taxon>Thermotogaceae</taxon>
        <taxon>Thermotoga</taxon>
    </lineage>
</organism>